<evidence type="ECO:0000255" key="1">
    <source>
        <dbReference type="HAMAP-Rule" id="MF_00089"/>
    </source>
</evidence>
<evidence type="ECO:0000256" key="2">
    <source>
        <dbReference type="SAM" id="MobiDB-lite"/>
    </source>
</evidence>
<sequence length="631" mass="70785">MSTTKLTRREQREHAQRFIDTLAGTAFPNSRRIYVHGSQADIRVPMREIQLSPTLVGGDKDKPRYETNEPIPVYDTSGPYGDPDISIDVRQGLAKLRQPWIDARNDCAPLSERSSAYTKARLADDGLDELRFSGLLTPKRAVAGKCVTQLHYARQGIVTPEMEFIAIRENMGRERIRSEVLRQQHAGEGFGAHLPENITPEFVRDEVAAGRAIIPANINHPESEPMIIGRNFLVKVNANIGNSAVTSSIEEEVEKLVWSTRWGADTVMDLSTGRYIHETREWILRNSPVPIGTVPIYQALEKVNGIAENLTWQVFRDTLLEQAEQGVDYFTIHAGVLLRYVPMTAKRLTGIVSRGGSIMAKWCLSHHQENFLYQHFREICEICAAYDVSLSLGDGLRPGSIQDANDEAQFSELRTLGELTKIAWEYDVQVMIEGPGHVPMQMIRRNMTEQLEHCHEAPFYTLGPLTTDIAPGYDHFTSGIGAAMIGWFGCAMLCYVTPKEHLGLPNKEDVKQGLITYKIAAHAADLAKGHPGAQIRDNAMSKARFEFRWEDQFNLALDPFTARAYHDETLPQESGKVAHFCSMCGPKFCSMKITQEVRDYAAKQSIEAGMADMSNNFRARGGEIYLKQEEA</sequence>
<protein>
    <recommendedName>
        <fullName evidence="1">Phosphomethylpyrimidine synthase</fullName>
        <ecNumber evidence="1">4.1.99.17</ecNumber>
    </recommendedName>
    <alternativeName>
        <fullName evidence="1">Hydroxymethylpyrimidine phosphate synthase</fullName>
        <shortName evidence="1">HMP-P synthase</shortName>
        <shortName evidence="1">HMP-phosphate synthase</shortName>
        <shortName evidence="1">HMPP synthase</shortName>
    </alternativeName>
    <alternativeName>
        <fullName evidence="1">Thiamine biosynthesis protein ThiC</fullName>
    </alternativeName>
</protein>
<organism>
    <name type="scientific">Klebsiella pneumoniae subsp. pneumoniae (strain ATCC 700721 / MGH 78578)</name>
    <dbReference type="NCBI Taxonomy" id="272620"/>
    <lineage>
        <taxon>Bacteria</taxon>
        <taxon>Pseudomonadati</taxon>
        <taxon>Pseudomonadota</taxon>
        <taxon>Gammaproteobacteria</taxon>
        <taxon>Enterobacterales</taxon>
        <taxon>Enterobacteriaceae</taxon>
        <taxon>Klebsiella/Raoultella group</taxon>
        <taxon>Klebsiella</taxon>
        <taxon>Klebsiella pneumoniae complex</taxon>
    </lineage>
</organism>
<keyword id="KW-0004">4Fe-4S</keyword>
<keyword id="KW-0408">Iron</keyword>
<keyword id="KW-0411">Iron-sulfur</keyword>
<keyword id="KW-0456">Lyase</keyword>
<keyword id="KW-0479">Metal-binding</keyword>
<keyword id="KW-0949">S-adenosyl-L-methionine</keyword>
<keyword id="KW-0784">Thiamine biosynthesis</keyword>
<keyword id="KW-0862">Zinc</keyword>
<reference key="1">
    <citation type="submission" date="2006-09" db="EMBL/GenBank/DDBJ databases">
        <authorList>
            <consortium name="The Klebsiella pneumonia Genome Sequencing Project"/>
            <person name="McClelland M."/>
            <person name="Sanderson E.K."/>
            <person name="Spieth J."/>
            <person name="Clifton W.S."/>
            <person name="Latreille P."/>
            <person name="Sabo A."/>
            <person name="Pepin K."/>
            <person name="Bhonagiri V."/>
            <person name="Porwollik S."/>
            <person name="Ali J."/>
            <person name="Wilson R.K."/>
        </authorList>
    </citation>
    <scope>NUCLEOTIDE SEQUENCE [LARGE SCALE GENOMIC DNA]</scope>
    <source>
        <strain>ATCC 700721 / MGH 78578</strain>
    </source>
</reference>
<name>THIC_KLEP7</name>
<dbReference type="EC" id="4.1.99.17" evidence="1"/>
<dbReference type="EMBL" id="CP000647">
    <property type="protein sequence ID" value="ABR79735.1"/>
    <property type="molecule type" value="Genomic_DNA"/>
</dbReference>
<dbReference type="RefSeq" id="WP_004873297.1">
    <property type="nucleotide sequence ID" value="NC_009648.1"/>
</dbReference>
<dbReference type="SMR" id="A6TGQ1"/>
<dbReference type="STRING" id="272620.KPN_04376"/>
<dbReference type="PaxDb" id="272620-KPN_04376"/>
<dbReference type="EnsemblBacteria" id="ABR79735">
    <property type="protein sequence ID" value="ABR79735"/>
    <property type="gene ID" value="KPN_04376"/>
</dbReference>
<dbReference type="KEGG" id="kpn:KPN_04376"/>
<dbReference type="HOGENOM" id="CLU_013181_2_1_6"/>
<dbReference type="UniPathway" id="UPA00060"/>
<dbReference type="Proteomes" id="UP000000265">
    <property type="component" value="Chromosome"/>
</dbReference>
<dbReference type="GO" id="GO:0005829">
    <property type="term" value="C:cytosol"/>
    <property type="evidence" value="ECO:0007669"/>
    <property type="project" value="TreeGrafter"/>
</dbReference>
<dbReference type="GO" id="GO:0051539">
    <property type="term" value="F:4 iron, 4 sulfur cluster binding"/>
    <property type="evidence" value="ECO:0007669"/>
    <property type="project" value="UniProtKB-KW"/>
</dbReference>
<dbReference type="GO" id="GO:0016830">
    <property type="term" value="F:carbon-carbon lyase activity"/>
    <property type="evidence" value="ECO:0007669"/>
    <property type="project" value="InterPro"/>
</dbReference>
<dbReference type="GO" id="GO:0008270">
    <property type="term" value="F:zinc ion binding"/>
    <property type="evidence" value="ECO:0007669"/>
    <property type="project" value="UniProtKB-UniRule"/>
</dbReference>
<dbReference type="GO" id="GO:0009228">
    <property type="term" value="P:thiamine biosynthetic process"/>
    <property type="evidence" value="ECO:0007669"/>
    <property type="project" value="UniProtKB-KW"/>
</dbReference>
<dbReference type="GO" id="GO:0009229">
    <property type="term" value="P:thiamine diphosphate biosynthetic process"/>
    <property type="evidence" value="ECO:0007669"/>
    <property type="project" value="UniProtKB-UniRule"/>
</dbReference>
<dbReference type="FunFam" id="3.20.20.540:FF:000001">
    <property type="entry name" value="Phosphomethylpyrimidine synthase"/>
    <property type="match status" value="1"/>
</dbReference>
<dbReference type="Gene3D" id="6.10.250.620">
    <property type="match status" value="1"/>
</dbReference>
<dbReference type="Gene3D" id="3.20.20.540">
    <property type="entry name" value="Radical SAM ThiC family, central domain"/>
    <property type="match status" value="1"/>
</dbReference>
<dbReference type="HAMAP" id="MF_00089">
    <property type="entry name" value="ThiC"/>
    <property type="match status" value="1"/>
</dbReference>
<dbReference type="InterPro" id="IPR037509">
    <property type="entry name" value="ThiC"/>
</dbReference>
<dbReference type="InterPro" id="IPR025747">
    <property type="entry name" value="ThiC-associated_dom"/>
</dbReference>
<dbReference type="InterPro" id="IPR038521">
    <property type="entry name" value="ThiC/Bza_core_dom"/>
</dbReference>
<dbReference type="InterPro" id="IPR002817">
    <property type="entry name" value="ThiC/BzaA/B"/>
</dbReference>
<dbReference type="NCBIfam" id="NF006763">
    <property type="entry name" value="PRK09284.1"/>
    <property type="match status" value="1"/>
</dbReference>
<dbReference type="NCBIfam" id="NF009895">
    <property type="entry name" value="PRK13352.1"/>
    <property type="match status" value="1"/>
</dbReference>
<dbReference type="NCBIfam" id="TIGR00190">
    <property type="entry name" value="thiC"/>
    <property type="match status" value="1"/>
</dbReference>
<dbReference type="PANTHER" id="PTHR30557:SF1">
    <property type="entry name" value="PHOSPHOMETHYLPYRIMIDINE SYNTHASE, CHLOROPLASTIC"/>
    <property type="match status" value="1"/>
</dbReference>
<dbReference type="PANTHER" id="PTHR30557">
    <property type="entry name" value="THIAMINE BIOSYNTHESIS PROTEIN THIC"/>
    <property type="match status" value="1"/>
</dbReference>
<dbReference type="Pfam" id="PF13667">
    <property type="entry name" value="ThiC-associated"/>
    <property type="match status" value="1"/>
</dbReference>
<dbReference type="Pfam" id="PF01964">
    <property type="entry name" value="ThiC_Rad_SAM"/>
    <property type="match status" value="1"/>
</dbReference>
<dbReference type="SFLD" id="SFLDF00407">
    <property type="entry name" value="phosphomethylpyrimidine_syntha"/>
    <property type="match status" value="1"/>
</dbReference>
<dbReference type="SFLD" id="SFLDG01114">
    <property type="entry name" value="phosphomethylpyrimidine_syntha"/>
    <property type="match status" value="1"/>
</dbReference>
<dbReference type="SFLD" id="SFLDS00113">
    <property type="entry name" value="Radical_SAM_Phosphomethylpyrim"/>
    <property type="match status" value="1"/>
</dbReference>
<accession>A6TGQ1</accession>
<proteinExistence type="inferred from homology"/>
<comment type="function">
    <text evidence="1">Catalyzes the synthesis of the hydroxymethylpyrimidine phosphate (HMP-P) moiety of thiamine from aminoimidazole ribotide (AIR) in a radical S-adenosyl-L-methionine (SAM)-dependent reaction.</text>
</comment>
<comment type="catalytic activity">
    <reaction evidence="1">
        <text>5-amino-1-(5-phospho-beta-D-ribosyl)imidazole + S-adenosyl-L-methionine = 4-amino-2-methyl-5-(phosphooxymethyl)pyrimidine + CO + 5'-deoxyadenosine + formate + L-methionine + 3 H(+)</text>
        <dbReference type="Rhea" id="RHEA:24840"/>
        <dbReference type="ChEBI" id="CHEBI:15378"/>
        <dbReference type="ChEBI" id="CHEBI:15740"/>
        <dbReference type="ChEBI" id="CHEBI:17245"/>
        <dbReference type="ChEBI" id="CHEBI:17319"/>
        <dbReference type="ChEBI" id="CHEBI:57844"/>
        <dbReference type="ChEBI" id="CHEBI:58354"/>
        <dbReference type="ChEBI" id="CHEBI:59789"/>
        <dbReference type="ChEBI" id="CHEBI:137981"/>
        <dbReference type="EC" id="4.1.99.17"/>
    </reaction>
</comment>
<comment type="cofactor">
    <cofactor evidence="1">
        <name>[4Fe-4S] cluster</name>
        <dbReference type="ChEBI" id="CHEBI:49883"/>
    </cofactor>
    <text evidence="1">Binds 1 [4Fe-4S] cluster per subunit. The cluster is coordinated with 3 cysteines and an exchangeable S-adenosyl-L-methionine.</text>
</comment>
<comment type="pathway">
    <text evidence="1">Cofactor biosynthesis; thiamine diphosphate biosynthesis.</text>
</comment>
<comment type="subunit">
    <text evidence="1">Homodimer.</text>
</comment>
<comment type="similarity">
    <text evidence="1">Belongs to the ThiC family.</text>
</comment>
<feature type="chain" id="PRO_1000004765" description="Phosphomethylpyrimidine synthase">
    <location>
        <begin position="1"/>
        <end position="631"/>
    </location>
</feature>
<feature type="region of interest" description="Disordered" evidence="2">
    <location>
        <begin position="54"/>
        <end position="80"/>
    </location>
</feature>
<feature type="compositionally biased region" description="Basic and acidic residues" evidence="2">
    <location>
        <begin position="58"/>
        <end position="67"/>
    </location>
</feature>
<feature type="binding site" evidence="1">
    <location>
        <position position="239"/>
    </location>
    <ligand>
        <name>substrate</name>
    </ligand>
</feature>
<feature type="binding site" evidence="1">
    <location>
        <position position="268"/>
    </location>
    <ligand>
        <name>substrate</name>
    </ligand>
</feature>
<feature type="binding site" evidence="1">
    <location>
        <position position="297"/>
    </location>
    <ligand>
        <name>substrate</name>
    </ligand>
</feature>
<feature type="binding site" evidence="1">
    <location>
        <position position="333"/>
    </location>
    <ligand>
        <name>substrate</name>
    </ligand>
</feature>
<feature type="binding site" evidence="1">
    <location>
        <begin position="353"/>
        <end position="355"/>
    </location>
    <ligand>
        <name>substrate</name>
    </ligand>
</feature>
<feature type="binding site" evidence="1">
    <location>
        <begin position="394"/>
        <end position="397"/>
    </location>
    <ligand>
        <name>substrate</name>
    </ligand>
</feature>
<feature type="binding site" evidence="1">
    <location>
        <position position="433"/>
    </location>
    <ligand>
        <name>substrate</name>
    </ligand>
</feature>
<feature type="binding site" evidence="1">
    <location>
        <position position="437"/>
    </location>
    <ligand>
        <name>Zn(2+)</name>
        <dbReference type="ChEBI" id="CHEBI:29105"/>
    </ligand>
</feature>
<feature type="binding site" evidence="1">
    <location>
        <position position="460"/>
    </location>
    <ligand>
        <name>substrate</name>
    </ligand>
</feature>
<feature type="binding site" evidence="1">
    <location>
        <position position="501"/>
    </location>
    <ligand>
        <name>Zn(2+)</name>
        <dbReference type="ChEBI" id="CHEBI:29105"/>
    </ligand>
</feature>
<feature type="binding site" evidence="1">
    <location>
        <position position="581"/>
    </location>
    <ligand>
        <name>[4Fe-4S] cluster</name>
        <dbReference type="ChEBI" id="CHEBI:49883"/>
        <note>4Fe-4S-S-AdoMet</note>
    </ligand>
</feature>
<feature type="binding site" evidence="1">
    <location>
        <position position="584"/>
    </location>
    <ligand>
        <name>[4Fe-4S] cluster</name>
        <dbReference type="ChEBI" id="CHEBI:49883"/>
        <note>4Fe-4S-S-AdoMet</note>
    </ligand>
</feature>
<feature type="binding site" evidence="1">
    <location>
        <position position="589"/>
    </location>
    <ligand>
        <name>[4Fe-4S] cluster</name>
        <dbReference type="ChEBI" id="CHEBI:49883"/>
        <note>4Fe-4S-S-AdoMet</note>
    </ligand>
</feature>
<gene>
    <name evidence="1" type="primary">thiC</name>
    <name type="ordered locus">KPN78578_43110</name>
    <name type="ORF">KPN_04376</name>
</gene>